<comment type="function">
    <text evidence="1">Participates in cysteine desulfuration mediated by SufS. Cysteine desulfuration mobilizes sulfur from L-cysteine to yield L-alanine and constitutes an essential step in sulfur metabolism for biosynthesis of a variety of sulfur-containing biomolecules. Functions as a sulfur acceptor for SufS, by mediating the direct transfer of the sulfur atom from the S-sulfanylcysteine of SufS, an intermediate product of cysteine desulfuration process.</text>
</comment>
<comment type="pathway">
    <text evidence="1">Cofactor biosynthesis; iron-sulfur cluster biosynthesis.</text>
</comment>
<comment type="subunit">
    <text evidence="1">Homodimer. Interacts with SufS.</text>
</comment>
<comment type="subcellular location">
    <subcellularLocation>
        <location evidence="1">Cytoplasm</location>
    </subcellularLocation>
</comment>
<comment type="similarity">
    <text evidence="1">Belongs to the SufE family.</text>
</comment>
<name>SUFE_SALTY</name>
<gene>
    <name evidence="1" type="primary">sufE</name>
    <name type="ordered locus">STM1374</name>
</gene>
<organism>
    <name type="scientific">Salmonella typhimurium (strain LT2 / SGSC1412 / ATCC 700720)</name>
    <dbReference type="NCBI Taxonomy" id="99287"/>
    <lineage>
        <taxon>Bacteria</taxon>
        <taxon>Pseudomonadati</taxon>
        <taxon>Pseudomonadota</taxon>
        <taxon>Gammaproteobacteria</taxon>
        <taxon>Enterobacterales</taxon>
        <taxon>Enterobacteriaceae</taxon>
        <taxon>Salmonella</taxon>
    </lineage>
</organism>
<proteinExistence type="evidence at protein level"/>
<dbReference type="EMBL" id="AE006468">
    <property type="protein sequence ID" value="AAL20298.1"/>
    <property type="molecule type" value="Genomic_DNA"/>
</dbReference>
<dbReference type="RefSeq" id="WP_000729468.1">
    <property type="nucleotide sequence ID" value="NC_003197.2"/>
</dbReference>
<dbReference type="PDB" id="3G0M">
    <property type="method" value="X-ray"/>
    <property type="resolution" value="1.76 A"/>
    <property type="chains" value="A=1-138"/>
</dbReference>
<dbReference type="PDBsum" id="3G0M"/>
<dbReference type="SMR" id="Q8ZPQ1"/>
<dbReference type="STRING" id="99287.STM1374"/>
<dbReference type="PaxDb" id="99287-STM1374"/>
<dbReference type="KEGG" id="stm:STM1374"/>
<dbReference type="PATRIC" id="fig|99287.12.peg.1457"/>
<dbReference type="HOGENOM" id="CLU_124502_1_1_6"/>
<dbReference type="OMA" id="NFSRCAN"/>
<dbReference type="PhylomeDB" id="Q8ZPQ1"/>
<dbReference type="BioCyc" id="SENT99287:STM1374-MONOMER"/>
<dbReference type="UniPathway" id="UPA00266"/>
<dbReference type="EvolutionaryTrace" id="Q8ZPQ1"/>
<dbReference type="Proteomes" id="UP000001014">
    <property type="component" value="Chromosome"/>
</dbReference>
<dbReference type="GO" id="GO:0005737">
    <property type="term" value="C:cytoplasm"/>
    <property type="evidence" value="ECO:0007669"/>
    <property type="project" value="UniProtKB-SubCell"/>
</dbReference>
<dbReference type="GO" id="GO:0016226">
    <property type="term" value="P:iron-sulfur cluster assembly"/>
    <property type="evidence" value="ECO:0007669"/>
    <property type="project" value="InterPro"/>
</dbReference>
<dbReference type="GO" id="GO:0006790">
    <property type="term" value="P:sulfur compound metabolic process"/>
    <property type="evidence" value="ECO:0007669"/>
    <property type="project" value="InterPro"/>
</dbReference>
<dbReference type="Gene3D" id="3.90.1010.10">
    <property type="match status" value="1"/>
</dbReference>
<dbReference type="HAMAP" id="MF_01832">
    <property type="entry name" value="SufE"/>
    <property type="match status" value="1"/>
</dbReference>
<dbReference type="InterPro" id="IPR023939">
    <property type="entry name" value="Cysteine_desulfuration_SufE"/>
</dbReference>
<dbReference type="InterPro" id="IPR003808">
    <property type="entry name" value="Fe-S_metab-assoc_dom"/>
</dbReference>
<dbReference type="NCBIfam" id="NF006792">
    <property type="entry name" value="PRK09296.1"/>
    <property type="match status" value="1"/>
</dbReference>
<dbReference type="PANTHER" id="PTHR43597:SF3">
    <property type="entry name" value="CYSTEINE DESULFURATION PROTEIN SUFE"/>
    <property type="match status" value="1"/>
</dbReference>
<dbReference type="PANTHER" id="PTHR43597">
    <property type="entry name" value="SULFUR ACCEPTOR PROTEIN CSDE"/>
    <property type="match status" value="1"/>
</dbReference>
<dbReference type="Pfam" id="PF02657">
    <property type="entry name" value="SufE"/>
    <property type="match status" value="1"/>
</dbReference>
<dbReference type="SUPFAM" id="SSF82649">
    <property type="entry name" value="SufE/NifU"/>
    <property type="match status" value="1"/>
</dbReference>
<evidence type="ECO:0000255" key="1">
    <source>
        <dbReference type="HAMAP-Rule" id="MF_01832"/>
    </source>
</evidence>
<evidence type="ECO:0007829" key="2">
    <source>
        <dbReference type="PDB" id="3G0M"/>
    </source>
</evidence>
<keyword id="KW-0002">3D-structure</keyword>
<keyword id="KW-0963">Cytoplasm</keyword>
<keyword id="KW-1185">Reference proteome</keyword>
<reference key="1">
    <citation type="journal article" date="2001" name="Nature">
        <title>Complete genome sequence of Salmonella enterica serovar Typhimurium LT2.</title>
        <authorList>
            <person name="McClelland M."/>
            <person name="Sanderson K.E."/>
            <person name="Spieth J."/>
            <person name="Clifton S.W."/>
            <person name="Latreille P."/>
            <person name="Courtney L."/>
            <person name="Porwollik S."/>
            <person name="Ali J."/>
            <person name="Dante M."/>
            <person name="Du F."/>
            <person name="Hou S."/>
            <person name="Layman D."/>
            <person name="Leonard S."/>
            <person name="Nguyen C."/>
            <person name="Scott K."/>
            <person name="Holmes A."/>
            <person name="Grewal N."/>
            <person name="Mulvaney E."/>
            <person name="Ryan E."/>
            <person name="Sun H."/>
            <person name="Florea L."/>
            <person name="Miller W."/>
            <person name="Stoneking T."/>
            <person name="Nhan M."/>
            <person name="Waterston R."/>
            <person name="Wilson R.K."/>
        </authorList>
    </citation>
    <scope>NUCLEOTIDE SEQUENCE [LARGE SCALE GENOMIC DNA]</scope>
    <source>
        <strain>LT2 / SGSC1412 / ATCC 700720</strain>
    </source>
</reference>
<accession>Q8ZPQ1</accession>
<feature type="chain" id="PRO_0000202131" description="Cysteine desulfuration protein SufE">
    <location>
        <begin position="1"/>
        <end position="138"/>
    </location>
</feature>
<feature type="active site" description="Cysteine persulfide intermediate" evidence="1">
    <location>
        <position position="51"/>
    </location>
</feature>
<feature type="helix" evidence="2">
    <location>
        <begin position="7"/>
        <end position="15"/>
    </location>
</feature>
<feature type="helix" evidence="2">
    <location>
        <begin position="20"/>
        <end position="32"/>
    </location>
</feature>
<feature type="helix" evidence="2">
    <location>
        <begin position="39"/>
        <end position="41"/>
    </location>
</feature>
<feature type="helix" evidence="2">
    <location>
        <begin position="44"/>
        <end position="46"/>
    </location>
</feature>
<feature type="strand" evidence="2">
    <location>
        <begin position="50"/>
        <end position="53"/>
    </location>
</feature>
<feature type="strand" evidence="2">
    <location>
        <begin position="55"/>
        <end position="61"/>
    </location>
</feature>
<feature type="strand" evidence="2">
    <location>
        <begin position="65"/>
        <end position="75"/>
    </location>
</feature>
<feature type="helix" evidence="2">
    <location>
        <begin position="76"/>
        <end position="89"/>
    </location>
</feature>
<feature type="helix" evidence="2">
    <location>
        <begin position="94"/>
        <end position="99"/>
    </location>
</feature>
<feature type="helix" evidence="2">
    <location>
        <begin position="103"/>
        <end position="109"/>
    </location>
</feature>
<feature type="helix" evidence="2">
    <location>
        <begin position="112"/>
        <end position="114"/>
    </location>
</feature>
<feature type="helix" evidence="2">
    <location>
        <begin position="117"/>
        <end position="135"/>
    </location>
</feature>
<protein>
    <recommendedName>
        <fullName evidence="1">Cysteine desulfuration protein SufE</fullName>
    </recommendedName>
</protein>
<sequence length="138" mass="15760">MAALPDKEKLLRNFTRCANWEEKYLYIIELGQRLAELNPQDRNPQNTIHGCQSQVWIVMRRNANGIIELQGDSDAAIVKGLMAVVFILYHQMTAQDIVHFDVRPWFEKMALAQHLTPSRSQGLEAMIRAIRAKAATLS</sequence>